<accession>A0A7J6JXB6</accession>
<name>FER1_TOXGO</name>
<protein>
    <recommendedName>
        <fullName evidence="6 7">Ferlin 1</fullName>
        <shortName evidence="6 7">FER1</shortName>
        <shortName evidence="6">TgFER1</shortName>
    </recommendedName>
</protein>
<organism evidence="10">
    <name type="scientific">Toxoplasma gondii</name>
    <dbReference type="NCBI Taxonomy" id="5811"/>
    <lineage>
        <taxon>Eukaryota</taxon>
        <taxon>Sar</taxon>
        <taxon>Alveolata</taxon>
        <taxon>Apicomplexa</taxon>
        <taxon>Conoidasida</taxon>
        <taxon>Coccidia</taxon>
        <taxon>Eucoccidiorida</taxon>
        <taxon>Eimeriorina</taxon>
        <taxon>Sarcocystidae</taxon>
        <taxon>Toxoplasma</taxon>
    </lineage>
</organism>
<keyword id="KW-0963">Cytoplasm</keyword>
<keyword id="KW-0967">Endosome</keyword>
<keyword id="KW-0268">Exocytosis</keyword>
<keyword id="KW-0333">Golgi apparatus</keyword>
<keyword id="KW-0472">Membrane</keyword>
<keyword id="KW-1185">Reference proteome</keyword>
<keyword id="KW-0677">Repeat</keyword>
<keyword id="KW-0812">Transmembrane</keyword>
<keyword id="KW-1133">Transmembrane helix</keyword>
<dbReference type="EMBL" id="JAAUHK010000196">
    <property type="protein sequence ID" value="KAF4639140.1"/>
    <property type="molecule type" value="Genomic_DNA"/>
</dbReference>
<dbReference type="VEuPathDB" id="ToxoDB:TGME49_309420"/>
<dbReference type="Proteomes" id="UP000557509">
    <property type="component" value="Unassembled WGS sequence"/>
</dbReference>
<dbReference type="GO" id="GO:0010008">
    <property type="term" value="C:endosome membrane"/>
    <property type="evidence" value="ECO:0000314"/>
    <property type="project" value="UniProtKB"/>
</dbReference>
<dbReference type="GO" id="GO:0032588">
    <property type="term" value="C:trans-Golgi network membrane"/>
    <property type="evidence" value="ECO:0000315"/>
    <property type="project" value="UniProtKB"/>
</dbReference>
<dbReference type="GO" id="GO:0007009">
    <property type="term" value="P:plasma membrane organization"/>
    <property type="evidence" value="ECO:0007669"/>
    <property type="project" value="TreeGrafter"/>
</dbReference>
<dbReference type="GO" id="GO:0045055">
    <property type="term" value="P:regulated exocytosis"/>
    <property type="evidence" value="ECO:0000315"/>
    <property type="project" value="UniProtKB"/>
</dbReference>
<dbReference type="GO" id="GO:0099500">
    <property type="term" value="P:vesicle fusion to plasma membrane"/>
    <property type="evidence" value="ECO:0000315"/>
    <property type="project" value="UniProtKB"/>
</dbReference>
<dbReference type="CDD" id="cd00030">
    <property type="entry name" value="C2"/>
    <property type="match status" value="1"/>
</dbReference>
<dbReference type="CDD" id="cd04037">
    <property type="entry name" value="C2E_Ferlin"/>
    <property type="match status" value="1"/>
</dbReference>
<dbReference type="Gene3D" id="2.60.40.150">
    <property type="entry name" value="C2 domain"/>
    <property type="match status" value="5"/>
</dbReference>
<dbReference type="InterPro" id="IPR000008">
    <property type="entry name" value="C2_dom"/>
</dbReference>
<dbReference type="InterPro" id="IPR035892">
    <property type="entry name" value="C2_domain_sf"/>
</dbReference>
<dbReference type="InterPro" id="IPR037724">
    <property type="entry name" value="C2E_Ferlin"/>
</dbReference>
<dbReference type="InterPro" id="IPR012968">
    <property type="entry name" value="FerIin_dom"/>
</dbReference>
<dbReference type="InterPro" id="IPR037721">
    <property type="entry name" value="Ferlin"/>
</dbReference>
<dbReference type="PANTHER" id="PTHR12546">
    <property type="entry name" value="FER-1-LIKE"/>
    <property type="match status" value="1"/>
</dbReference>
<dbReference type="PANTHER" id="PTHR12546:SF33">
    <property type="entry name" value="SPERM VESICLE FUSION PROTEIN FER-1"/>
    <property type="match status" value="1"/>
</dbReference>
<dbReference type="Pfam" id="PF00168">
    <property type="entry name" value="C2"/>
    <property type="match status" value="5"/>
</dbReference>
<dbReference type="SMART" id="SM00239">
    <property type="entry name" value="C2"/>
    <property type="match status" value="6"/>
</dbReference>
<dbReference type="SMART" id="SM01202">
    <property type="entry name" value="FerI"/>
    <property type="match status" value="1"/>
</dbReference>
<dbReference type="SUPFAM" id="SSF49562">
    <property type="entry name" value="C2 domain (Calcium/lipid-binding domain, CaLB)"/>
    <property type="match status" value="5"/>
</dbReference>
<dbReference type="PROSITE" id="PS50004">
    <property type="entry name" value="C2"/>
    <property type="match status" value="5"/>
</dbReference>
<comment type="function">
    <text evidence="4 5">Plays a role in microneme replenishment, probably at the vesicular trafficking level (PubMed:39294204). Directs microneme organelle traffic differentially based on microneme population (PubMed:39294204). Regulates microneme secretion: facilitates microneme membrane fusion with the plasma membrane (PubMed:33803212, PubMed:39294204).</text>
</comment>
<comment type="subcellular location">
    <subcellularLocation>
        <location evidence="5">Golgi apparatus</location>
        <location evidence="5">trans-Golgi network membrane</location>
        <topology evidence="1">Single-pass membrane protein</topology>
    </subcellularLocation>
    <subcellularLocation>
        <location evidence="5">Endosome membrane</location>
        <topology evidence="1">Single-pass membrane protein</topology>
    </subcellularLocation>
    <subcellularLocation>
        <location evidence="5">Cytoplasm</location>
    </subcellularLocation>
    <text evidence="5">In intracellular parasites localizes to the trans-Golgi-endosome network; upon egress disperses into the cytoplasm (PubMed:39294204). In extracellular parasites, localizes throughout the cytoplasm (PubMed:39294204).</text>
</comment>
<comment type="disruption phenotype">
    <text evidence="5">Attempts to generate conditional knockouts failed.</text>
</comment>
<comment type="miscellaneous">
    <text evidence="5">Overexpression causes parasite lethality.</text>
</comment>
<comment type="similarity">
    <text evidence="8">Belongs to the ferlin family.</text>
</comment>
<proteinExistence type="evidence at protein level"/>
<reference evidence="10" key="1">
    <citation type="submission" date="2020-03" db="EMBL/GenBank/DDBJ databases">
        <title>Genome sequence of Toxoplasma gondii RH-88 strain.</title>
        <authorList>
            <person name="Lorenzi H.A."/>
            <person name="Venepally P."/>
            <person name="Rozenberg A."/>
            <person name="Sibley D."/>
        </authorList>
    </citation>
    <scope>NUCLEOTIDE SEQUENCE [LARGE SCALE GENOMIC DNA]</scope>
    <source>
        <strain evidence="10">RH-88</strain>
    </source>
</reference>
<reference evidence="8" key="2">
    <citation type="journal article" date="2021" name="Life">
        <title>Ferlins and TgDOC2 in Toxoplasma Microneme, Rhoptry and Dense Granule Secretion.</title>
        <authorList>
            <person name="Tagoe D.N.A."/>
            <person name="Drozda A.A."/>
            <person name="Falco J.A."/>
            <person name="Bechtel T.J."/>
            <person name="Weerapana E."/>
            <person name="Gubbels M.J."/>
        </authorList>
    </citation>
    <scope>FUNCTION</scope>
    <source>
        <strain evidence="6">RH</strain>
    </source>
</reference>
<reference evidence="8" key="3">
    <citation type="journal article" date="2024" name="Sci. Rep.">
        <title>Toxoplasma FER1 is a versatile and dynamic mediator of differential microneme trafficking and microneme exocytosis.</title>
        <authorList>
            <person name="Tagoe D.N.A."/>
            <person name="Ribeiro E Silva A."/>
            <person name="Drozda A.A."/>
            <person name="Coppens I."/>
            <person name="Coleman B.I."/>
            <person name="Gubbels M.J."/>
        </authorList>
    </citation>
    <scope>FUNCTION</scope>
    <scope>SUBCELLULAR LOCATION</scope>
    <scope>DISRUPTION PHENOTYPE</scope>
    <scope>PUTATIVE CA(2+)-BINDING RESIDUES</scope>
    <scope>MUTAGENESIS OF ASP-541; ASP-545 AND ASP-605</scope>
    <source>
        <strain evidence="7">RH</strain>
    </source>
</reference>
<gene>
    <name evidence="9" type="ORF">TGRH88_049110</name>
</gene>
<feature type="chain" id="PRO_0000461786" description="Ferlin 1">
    <location>
        <begin position="1"/>
        <end position="1425"/>
    </location>
</feature>
<feature type="transmembrane region" description="Helical" evidence="1">
    <location>
        <begin position="1404"/>
        <end position="1424"/>
    </location>
</feature>
<feature type="domain" description="C2 1" evidence="2">
    <location>
        <begin position="1"/>
        <end position="123"/>
    </location>
</feature>
<feature type="domain" description="C2 2" evidence="2">
    <location>
        <begin position="161"/>
        <end position="281"/>
    </location>
</feature>
<feature type="domain" description="C2 3" evidence="2">
    <location>
        <begin position="506"/>
        <end position="629"/>
    </location>
</feature>
<feature type="domain" description="C2 4" evidence="2">
    <location>
        <begin position="1032"/>
        <end position="1160"/>
    </location>
</feature>
<feature type="domain" description="C2 5" evidence="2">
    <location>
        <begin position="1192"/>
        <end position="1319"/>
    </location>
</feature>
<feature type="region of interest" description="Disordered" evidence="3">
    <location>
        <begin position="871"/>
        <end position="952"/>
    </location>
</feature>
<feature type="compositionally biased region" description="Basic and acidic residues" evidence="3">
    <location>
        <begin position="877"/>
        <end position="889"/>
    </location>
</feature>
<feature type="compositionally biased region" description="Basic and acidic residues" evidence="3">
    <location>
        <begin position="912"/>
        <end position="926"/>
    </location>
</feature>
<feature type="site" description="Putative Ca(2+)-binding residue" evidence="7">
    <location>
        <position position="541"/>
    </location>
</feature>
<feature type="site" description="Putative Ca(2+)-binding residue" evidence="7">
    <location>
        <position position="545"/>
    </location>
</feature>
<feature type="site" description="Putative Ca(2+)-binding residue" evidence="7">
    <location>
        <position position="605"/>
    </location>
</feature>
<feature type="mutagenesis site" description="Affects microneme trafficking; when associated with A-545 and A-605." evidence="5">
    <original>D</original>
    <variation>A</variation>
    <location>
        <position position="541"/>
    </location>
</feature>
<feature type="mutagenesis site" description="Affects microneme trafficking; when associated with A-541 and A-605." evidence="5">
    <original>D</original>
    <variation>A</variation>
    <location>
        <position position="545"/>
    </location>
</feature>
<feature type="mutagenesis site" description="Affects microneme trafficking; when associated with A-541 and A-545." evidence="5">
    <original>D</original>
    <variation>A</variation>
    <location>
        <position position="605"/>
    </location>
</feature>
<sequence>MAAKAIQYNIKVDLHEVKDLSFREAAGEKEIVPNPYIEVTVNGVTKTTIQKTQVVSATFNTSFNFTAYLTPDEFARSYVEVAVLHKYMLIGGVGLQSAVIGKYVFSFAYVYTKSQHWIYRQWVTLRNLDQPQDETGLLLITVGVFGPGDAMPVVDETVCVVNEGERTSTDVNVKLTHYSLSVNIFKGQDIPSVAGQFSTVLEPYVKVKHGGAELQTRPLPDSNPDWLASISIPACVPCFDGNVLVELWNGQDSSTAAGTLMGTVVLDYFQLIKNDLPPRWFNFYWRPPAEGLLGAVTDMMASAELREPIAYGGRILLSASAAKVQTPLPLGVRSARPIPDPATQECVWWLDLYEMTSATGYTSELRIEIAFGPHVIKTASLEANALGTYVIGDNLGRLPEMKIFAPVDEVQVWDVMMYVCSPPATTVAAGIADISNWFSGWGGSPTATQNTPEPAETPWTRLAWVRIPYDSRQFQNGKPQWYSLRSLDGSGTDMFSVLLGMEMFPTKAGKQRAPRLEYKLARFYFRALIYEGLHLPAVGYDVFPDPYIQVELASKTLRTSTIRQTLNPSYYEAYEIEIRLPENISLAPDINVEVISESNSLLSSDVVLGSVQYPIQKVPKEWTKAPVWLQLHSKAYPRCKARVLVAFELVPAEKAEDDTYPFYDDIRPSTKEGNIRLFLVGVRLFKPITQPFVTVCFGRDVENTAEPLWSQESSAPRTGEGGNWNFLEEFTVSVSLPKRMQHHSFLEVKIQDRTQGIGGESNVDVGMAYITLNPLLPWLDSRERAESLETFRLQMLEEVLIEDAENARRSADGGLAARTGGGSFDEDATKKKEMLAAERSRKMAIPYNDPDMANLKIEEVDDYVSFKVAPRPQASRLSREGTSRDERGKAPGKSLSGMPGPVARASPGAGEETEKKGDPVAEKKEGGAQAAPPVAPSAHQREALAASPEEETYGFTPEQLNFVLADLEEDDAEEMTRDEVPYELEADFTVDDLPYLRTPIFRPTDAGVPETVGYLKYVCRVFQSTDEDEGAEMDAVCKSLIETYNSTRDLVVRAYVLAARGLVPPSGASDIQTYVWIQDSENAATLPGGLSYNIRDTGYTKKQGFKPEFNRCYTLACSLPENSIVQIAVMNMGRLTDECIGRTYLDVEDRFFNKKVEQMVIEESTPIELRTLKNEGSTVSHGSLRGFFEIMRADYAQLHPPYTLASAEPDEYQLRVVIWRVKAVPLDDNSSISLFVRTIYQLEDSSEIVKDTDTHYNSTDGTAVYNWRMVFDVLIPAQIPVLKLQIWNYALLSSTEPIGEANFDLTADFFRARKRQQHYRVPRMWVRCSHPAHKGKLRGTIEIEASILPREEAEYTPVGNGRDEPNRDPFLPAVTTNRTYIDWQQIGETVGAASSAIMSGLKWTGVWMTVAGIIALVIFVMFLLK</sequence>
<evidence type="ECO:0000255" key="1"/>
<evidence type="ECO:0000255" key="2">
    <source>
        <dbReference type="PROSITE-ProRule" id="PRU00041"/>
    </source>
</evidence>
<evidence type="ECO:0000256" key="3">
    <source>
        <dbReference type="SAM" id="MobiDB-lite"/>
    </source>
</evidence>
<evidence type="ECO:0000269" key="4">
    <source>
    </source>
</evidence>
<evidence type="ECO:0000269" key="5">
    <source>
    </source>
</evidence>
<evidence type="ECO:0000303" key="6">
    <source>
    </source>
</evidence>
<evidence type="ECO:0000303" key="7">
    <source>
    </source>
</evidence>
<evidence type="ECO:0000305" key="8"/>
<evidence type="ECO:0000312" key="9">
    <source>
        <dbReference type="EMBL" id="KAF4639140.1"/>
    </source>
</evidence>
<evidence type="ECO:0000312" key="10">
    <source>
        <dbReference type="Proteomes" id="UP000557509"/>
    </source>
</evidence>